<proteinExistence type="inferred from homology"/>
<accession>P43575</accession>
<accession>D6VTL0</accession>
<evidence type="ECO:0000255" key="1"/>
<evidence type="ECO:0000305" key="2"/>
<keyword id="KW-0472">Membrane</keyword>
<keyword id="KW-1185">Reference proteome</keyword>
<keyword id="KW-0812">Transmembrane</keyword>
<keyword id="KW-1133">Transmembrane helix</keyword>
<dbReference type="EMBL" id="D50617">
    <property type="protein sequence ID" value="BAA09218.1"/>
    <property type="molecule type" value="Genomic_DNA"/>
</dbReference>
<dbReference type="EMBL" id="Z46255">
    <property type="protein sequence ID" value="CAA86356.1"/>
    <property type="molecule type" value="Genomic_DNA"/>
</dbReference>
<dbReference type="EMBL" id="AY693016">
    <property type="protein sequence ID" value="AAT93035.1"/>
    <property type="molecule type" value="Genomic_DNA"/>
</dbReference>
<dbReference type="EMBL" id="BK006940">
    <property type="protein sequence ID" value="DAA12420.1"/>
    <property type="molecule type" value="Genomic_DNA"/>
</dbReference>
<dbReference type="PIR" id="S48325">
    <property type="entry name" value="S48325"/>
</dbReference>
<dbReference type="RefSeq" id="NP_116633.1">
    <property type="nucleotide sequence ID" value="NM_001179946.1"/>
</dbReference>
<dbReference type="SMR" id="P43575"/>
<dbReference type="BioGRID" id="31126">
    <property type="interactions" value="66"/>
</dbReference>
<dbReference type="DIP" id="DIP-5427N"/>
<dbReference type="FunCoup" id="P43575">
    <property type="interactions" value="52"/>
</dbReference>
<dbReference type="STRING" id="4932.YFL020C"/>
<dbReference type="PaxDb" id="4932-YFL020C"/>
<dbReference type="TopDownProteomics" id="P43575"/>
<dbReference type="EnsemblFungi" id="YFL020C_mRNA">
    <property type="protein sequence ID" value="YFL020C"/>
    <property type="gene ID" value="YFL020C"/>
</dbReference>
<dbReference type="GeneID" id="850524"/>
<dbReference type="KEGG" id="sce:YFL020C"/>
<dbReference type="AGR" id="SGD:S000001874"/>
<dbReference type="SGD" id="S000001874">
    <property type="gene designation" value="PAU5"/>
</dbReference>
<dbReference type="VEuPathDB" id="FungiDB:YFL020C"/>
<dbReference type="eggNOG" id="ENOG502SR1B">
    <property type="taxonomic scope" value="Eukaryota"/>
</dbReference>
<dbReference type="GeneTree" id="ENSGT00940000176276"/>
<dbReference type="HOGENOM" id="CLU_136376_0_0_1"/>
<dbReference type="InParanoid" id="P43575"/>
<dbReference type="OrthoDB" id="4069694at2759"/>
<dbReference type="BioCyc" id="YEAST:G3O-30440-MONOMER"/>
<dbReference type="BioGRID-ORCS" id="850524">
    <property type="hits" value="8 hits in 10 CRISPR screens"/>
</dbReference>
<dbReference type="PRO" id="PR:P43575"/>
<dbReference type="Proteomes" id="UP000002311">
    <property type="component" value="Chromosome VI"/>
</dbReference>
<dbReference type="RNAct" id="P43575">
    <property type="molecule type" value="protein"/>
</dbReference>
<dbReference type="GO" id="GO:0005737">
    <property type="term" value="C:cytoplasm"/>
    <property type="evidence" value="ECO:0000314"/>
    <property type="project" value="SGD"/>
</dbReference>
<dbReference type="GO" id="GO:0009277">
    <property type="term" value="C:fungal-type cell wall"/>
    <property type="evidence" value="ECO:0000318"/>
    <property type="project" value="GO_Central"/>
</dbReference>
<dbReference type="GO" id="GO:0000324">
    <property type="term" value="C:fungal-type vacuole"/>
    <property type="evidence" value="ECO:0007005"/>
    <property type="project" value="SGD"/>
</dbReference>
<dbReference type="GO" id="GO:0016020">
    <property type="term" value="C:membrane"/>
    <property type="evidence" value="ECO:0000314"/>
    <property type="project" value="SGD"/>
</dbReference>
<dbReference type="GO" id="GO:0005199">
    <property type="term" value="F:structural constituent of cell wall"/>
    <property type="evidence" value="ECO:0000318"/>
    <property type="project" value="GO_Central"/>
</dbReference>
<dbReference type="GO" id="GO:0031505">
    <property type="term" value="P:fungal-type cell wall organization"/>
    <property type="evidence" value="ECO:0000318"/>
    <property type="project" value="GO_Central"/>
</dbReference>
<dbReference type="InterPro" id="IPR000992">
    <property type="entry name" value="SRP1_TIP1"/>
</dbReference>
<dbReference type="InterPro" id="IPR050788">
    <property type="entry name" value="Yeast_SRP1/TIP1_CWP"/>
</dbReference>
<dbReference type="PANTHER" id="PTHR31002:SF34">
    <property type="entry name" value="CELL WALL PROTEIN CWP1-RELATED"/>
    <property type="match status" value="1"/>
</dbReference>
<dbReference type="PANTHER" id="PTHR31002">
    <property type="entry name" value="SERIPAUPERIN"/>
    <property type="match status" value="1"/>
</dbReference>
<dbReference type="Pfam" id="PF00660">
    <property type="entry name" value="SRP1_TIP1"/>
    <property type="match status" value="1"/>
</dbReference>
<dbReference type="PROSITE" id="PS00724">
    <property type="entry name" value="SRP1_TIP1"/>
    <property type="match status" value="1"/>
</dbReference>
<reference key="1">
    <citation type="journal article" date="1995" name="Nat. Genet.">
        <title>Analysis of the nucleotide sequence of chromosome VI from Saccharomyces cerevisiae.</title>
        <authorList>
            <person name="Murakami Y."/>
            <person name="Naitou M."/>
            <person name="Hagiwara H."/>
            <person name="Shibata T."/>
            <person name="Ozawa M."/>
            <person name="Sasanuma S."/>
            <person name="Sasanuma M."/>
            <person name="Tsuchiya Y."/>
            <person name="Soeda E."/>
            <person name="Yokoyama K."/>
            <person name="Yamazaki M."/>
            <person name="Tashiro H."/>
            <person name="Eki T."/>
        </authorList>
    </citation>
    <scope>NUCLEOTIDE SEQUENCE [LARGE SCALE GENOMIC DNA]</scope>
    <source>
        <strain>ATCC 204508 / S288c</strain>
    </source>
</reference>
<reference key="2">
    <citation type="journal article" date="2014" name="G3 (Bethesda)">
        <title>The reference genome sequence of Saccharomyces cerevisiae: Then and now.</title>
        <authorList>
            <person name="Engel S.R."/>
            <person name="Dietrich F.S."/>
            <person name="Fisk D.G."/>
            <person name="Binkley G."/>
            <person name="Balakrishnan R."/>
            <person name="Costanzo M.C."/>
            <person name="Dwight S.S."/>
            <person name="Hitz B.C."/>
            <person name="Karra K."/>
            <person name="Nash R.S."/>
            <person name="Weng S."/>
            <person name="Wong E.D."/>
            <person name="Lloyd P."/>
            <person name="Skrzypek M.S."/>
            <person name="Miyasato S.R."/>
            <person name="Simison M."/>
            <person name="Cherry J.M."/>
        </authorList>
    </citation>
    <scope>GENOME REANNOTATION</scope>
    <source>
        <strain>ATCC 204508 / S288c</strain>
    </source>
</reference>
<reference key="3">
    <citation type="submission" date="1994-09" db="EMBL/GenBank/DDBJ databases">
        <authorList>
            <person name="Barrell B.G."/>
            <person name="Churcher C."/>
            <person name="Rajandream M.A."/>
        </authorList>
    </citation>
    <scope>NUCLEOTIDE SEQUENCE [GENOMIC DNA]</scope>
    <source>
        <strain>ATCC 204511 / S288c / AB972</strain>
    </source>
</reference>
<reference key="4">
    <citation type="journal article" date="2007" name="Genome Res.">
        <title>Approaching a complete repository of sequence-verified protein-encoding clones for Saccharomyces cerevisiae.</title>
        <authorList>
            <person name="Hu Y."/>
            <person name="Rolfs A."/>
            <person name="Bhullar B."/>
            <person name="Murthy T.V.S."/>
            <person name="Zhu C."/>
            <person name="Berger M.F."/>
            <person name="Camargo A.A."/>
            <person name="Kelley F."/>
            <person name="McCarron S."/>
            <person name="Jepson D."/>
            <person name="Richardson A."/>
            <person name="Raphael J."/>
            <person name="Moreira D."/>
            <person name="Taycher E."/>
            <person name="Zuo D."/>
            <person name="Mohr S."/>
            <person name="Kane M.F."/>
            <person name="Williamson J."/>
            <person name="Simpson A.J.G."/>
            <person name="Bulyk M.L."/>
            <person name="Harlow E."/>
            <person name="Marsischky G."/>
            <person name="Kolodner R.D."/>
            <person name="LaBaer J."/>
        </authorList>
    </citation>
    <scope>NUCLEOTIDE SEQUENCE [GENOMIC DNA]</scope>
    <source>
        <strain>ATCC 204508 / S288c</strain>
    </source>
</reference>
<sequence>MVKLTSIAAGVAAIAAGASAAATTTLSQSDERVNLVELGVYVSDIRAHLAEYYSFQAAHPTETYPVEIAEAVFNYGDFTTMLTGIPADQVTRVITGVPWYSSRLKPAISSALSADGIYTIAN</sequence>
<protein>
    <recommendedName>
        <fullName>Seripauperin-5</fullName>
    </recommendedName>
</protein>
<name>PAU5_YEAST</name>
<gene>
    <name type="primary">PAU5</name>
    <name type="ordered locus">YFL020C</name>
</gene>
<comment type="subcellular location">
    <subcellularLocation>
        <location evidence="2">Membrane</location>
        <topology evidence="2">Single-pass membrane protein</topology>
    </subcellularLocation>
</comment>
<comment type="similarity">
    <text evidence="2">Belongs to the SRP1/TIP1 family. Seripauperin subfamily.</text>
</comment>
<organism>
    <name type="scientific">Saccharomyces cerevisiae (strain ATCC 204508 / S288c)</name>
    <name type="common">Baker's yeast</name>
    <dbReference type="NCBI Taxonomy" id="559292"/>
    <lineage>
        <taxon>Eukaryota</taxon>
        <taxon>Fungi</taxon>
        <taxon>Dikarya</taxon>
        <taxon>Ascomycota</taxon>
        <taxon>Saccharomycotina</taxon>
        <taxon>Saccharomycetes</taxon>
        <taxon>Saccharomycetales</taxon>
        <taxon>Saccharomycetaceae</taxon>
        <taxon>Saccharomyces</taxon>
    </lineage>
</organism>
<feature type="chain" id="PRO_0000203782" description="Seripauperin-5">
    <location>
        <begin position="1"/>
        <end position="122"/>
    </location>
</feature>
<feature type="transmembrane region" description="Helical" evidence="1">
    <location>
        <begin position="7"/>
        <end position="24"/>
    </location>
</feature>